<dbReference type="EC" id="4.1.1.37" evidence="1"/>
<dbReference type="EMBL" id="AP006618">
    <property type="protein sequence ID" value="BAD58586.1"/>
    <property type="molecule type" value="Genomic_DNA"/>
</dbReference>
<dbReference type="RefSeq" id="WP_011210271.1">
    <property type="nucleotide sequence ID" value="NC_006361.1"/>
</dbReference>
<dbReference type="SMR" id="Q5YTA5"/>
<dbReference type="STRING" id="247156.NFA_37380"/>
<dbReference type="GeneID" id="61134431"/>
<dbReference type="KEGG" id="nfa:NFA_37380"/>
<dbReference type="eggNOG" id="COG0407">
    <property type="taxonomic scope" value="Bacteria"/>
</dbReference>
<dbReference type="HOGENOM" id="CLU_040933_0_1_11"/>
<dbReference type="OrthoDB" id="9806656at2"/>
<dbReference type="UniPathway" id="UPA00251">
    <property type="reaction ID" value="UER00321"/>
</dbReference>
<dbReference type="Proteomes" id="UP000006820">
    <property type="component" value="Chromosome"/>
</dbReference>
<dbReference type="GO" id="GO:0005829">
    <property type="term" value="C:cytosol"/>
    <property type="evidence" value="ECO:0007669"/>
    <property type="project" value="TreeGrafter"/>
</dbReference>
<dbReference type="GO" id="GO:0004853">
    <property type="term" value="F:uroporphyrinogen decarboxylase activity"/>
    <property type="evidence" value="ECO:0007669"/>
    <property type="project" value="UniProtKB-UniRule"/>
</dbReference>
<dbReference type="GO" id="GO:0006782">
    <property type="term" value="P:protoporphyrinogen IX biosynthetic process"/>
    <property type="evidence" value="ECO:0007669"/>
    <property type="project" value="UniProtKB-UniRule"/>
</dbReference>
<dbReference type="CDD" id="cd00717">
    <property type="entry name" value="URO-D"/>
    <property type="match status" value="1"/>
</dbReference>
<dbReference type="FunFam" id="3.20.20.210:FF:000008">
    <property type="entry name" value="Uroporphyrinogen decarboxylase"/>
    <property type="match status" value="1"/>
</dbReference>
<dbReference type="Gene3D" id="3.20.20.210">
    <property type="match status" value="1"/>
</dbReference>
<dbReference type="HAMAP" id="MF_00218">
    <property type="entry name" value="URO_D"/>
    <property type="match status" value="1"/>
</dbReference>
<dbReference type="InterPro" id="IPR038071">
    <property type="entry name" value="UROD/MetE-like_sf"/>
</dbReference>
<dbReference type="InterPro" id="IPR006361">
    <property type="entry name" value="Uroporphyrinogen_deCO2ase_HemE"/>
</dbReference>
<dbReference type="InterPro" id="IPR000257">
    <property type="entry name" value="Uroporphyrinogen_deCOase"/>
</dbReference>
<dbReference type="NCBIfam" id="TIGR01464">
    <property type="entry name" value="hemE"/>
    <property type="match status" value="1"/>
</dbReference>
<dbReference type="PANTHER" id="PTHR21091">
    <property type="entry name" value="METHYLTETRAHYDROFOLATE:HOMOCYSTEINE METHYLTRANSFERASE RELATED"/>
    <property type="match status" value="1"/>
</dbReference>
<dbReference type="PANTHER" id="PTHR21091:SF169">
    <property type="entry name" value="UROPORPHYRINOGEN DECARBOXYLASE"/>
    <property type="match status" value="1"/>
</dbReference>
<dbReference type="Pfam" id="PF01208">
    <property type="entry name" value="URO-D"/>
    <property type="match status" value="1"/>
</dbReference>
<dbReference type="SUPFAM" id="SSF51726">
    <property type="entry name" value="UROD/MetE-like"/>
    <property type="match status" value="1"/>
</dbReference>
<dbReference type="PROSITE" id="PS00906">
    <property type="entry name" value="UROD_1"/>
    <property type="match status" value="1"/>
</dbReference>
<dbReference type="PROSITE" id="PS00907">
    <property type="entry name" value="UROD_2"/>
    <property type="match status" value="1"/>
</dbReference>
<accession>Q5YTA5</accession>
<protein>
    <recommendedName>
        <fullName evidence="1">Uroporphyrinogen decarboxylase</fullName>
        <shortName evidence="1">UPD</shortName>
        <shortName evidence="1">URO-D</shortName>
        <ecNumber evidence="1">4.1.1.37</ecNumber>
    </recommendedName>
</protein>
<proteinExistence type="inferred from homology"/>
<reference key="1">
    <citation type="journal article" date="2004" name="Proc. Natl. Acad. Sci. U.S.A.">
        <title>The complete genomic sequence of Nocardia farcinica IFM 10152.</title>
        <authorList>
            <person name="Ishikawa J."/>
            <person name="Yamashita A."/>
            <person name="Mikami Y."/>
            <person name="Hoshino Y."/>
            <person name="Kurita H."/>
            <person name="Hotta K."/>
            <person name="Shiba T."/>
            <person name="Hattori M."/>
        </authorList>
    </citation>
    <scope>NUCLEOTIDE SEQUENCE [LARGE SCALE GENOMIC DNA]</scope>
    <source>
        <strain>IFM 10152</strain>
    </source>
</reference>
<gene>
    <name evidence="1" type="primary">hemE</name>
    <name type="ordered locus">NFA_37380</name>
</gene>
<comment type="function">
    <text evidence="1">Catalyzes the decarboxylation of four acetate groups of uroporphyrinogen-III to yield coproporphyrinogen-III.</text>
</comment>
<comment type="catalytic activity">
    <reaction evidence="1">
        <text>uroporphyrinogen III + 4 H(+) = coproporphyrinogen III + 4 CO2</text>
        <dbReference type="Rhea" id="RHEA:19865"/>
        <dbReference type="ChEBI" id="CHEBI:15378"/>
        <dbReference type="ChEBI" id="CHEBI:16526"/>
        <dbReference type="ChEBI" id="CHEBI:57308"/>
        <dbReference type="ChEBI" id="CHEBI:57309"/>
        <dbReference type="EC" id="4.1.1.37"/>
    </reaction>
</comment>
<comment type="pathway">
    <text evidence="1">Porphyrin-containing compound metabolism; protoporphyrin-IX biosynthesis; coproporphyrinogen-III from 5-aminolevulinate: step 4/4.</text>
</comment>
<comment type="subunit">
    <text evidence="1">Homodimer.</text>
</comment>
<comment type="subcellular location">
    <subcellularLocation>
        <location evidence="1">Cytoplasm</location>
    </subcellularLocation>
</comment>
<comment type="similarity">
    <text evidence="1">Belongs to the uroporphyrinogen decarboxylase family.</text>
</comment>
<sequence>MAGMSTHTRRRLTDAPFLAAATGATPSRRPVWFMRQAGRSLPEYRELRAGIGMLESCFDPELVCEITMQPIRRHGVDAAILFSDIVVPLKAAGIDLDIVAGVGPVVAAPVRSVADVRALPRLRPEEVGAVVEGVRLLVDALGQTPLIGFAGAPFTLASYLVEGGPSKHHERTKAMMYADPKTWHELLGVLTDITIAFLRAQLDAGVDAVQLFDSWAGALSPADYRAFVLPHSERVFTEIADAGVPRIHFGVGTGELLGAMGEAGADVVGVDWRVSLTEAARRVGPGKALQGNLDPAVLFAGPRAVEAHARRIAEEADRALALGAAGHIFNLGHGVLPDTDPGVLTALVELVHEL</sequence>
<feature type="chain" id="PRO_0000325668" description="Uroporphyrinogen decarboxylase">
    <location>
        <begin position="1"/>
        <end position="354"/>
    </location>
</feature>
<feature type="binding site" evidence="1">
    <location>
        <begin position="35"/>
        <end position="39"/>
    </location>
    <ligand>
        <name>substrate</name>
    </ligand>
</feature>
<feature type="binding site" evidence="1">
    <location>
        <position position="84"/>
    </location>
    <ligand>
        <name>substrate</name>
    </ligand>
</feature>
<feature type="binding site" evidence="1">
    <location>
        <position position="159"/>
    </location>
    <ligand>
        <name>substrate</name>
    </ligand>
</feature>
<feature type="binding site" evidence="1">
    <location>
        <position position="214"/>
    </location>
    <ligand>
        <name>substrate</name>
    </ligand>
</feature>
<feature type="binding site" evidence="1">
    <location>
        <position position="333"/>
    </location>
    <ligand>
        <name>substrate</name>
    </ligand>
</feature>
<feature type="site" description="Transition state stabilizer" evidence="1">
    <location>
        <position position="84"/>
    </location>
</feature>
<organism>
    <name type="scientific">Nocardia farcinica (strain IFM 10152)</name>
    <dbReference type="NCBI Taxonomy" id="247156"/>
    <lineage>
        <taxon>Bacteria</taxon>
        <taxon>Bacillati</taxon>
        <taxon>Actinomycetota</taxon>
        <taxon>Actinomycetes</taxon>
        <taxon>Mycobacteriales</taxon>
        <taxon>Nocardiaceae</taxon>
        <taxon>Nocardia</taxon>
    </lineage>
</organism>
<name>DCUP_NOCFA</name>
<evidence type="ECO:0000255" key="1">
    <source>
        <dbReference type="HAMAP-Rule" id="MF_00218"/>
    </source>
</evidence>
<keyword id="KW-0963">Cytoplasm</keyword>
<keyword id="KW-0210">Decarboxylase</keyword>
<keyword id="KW-0456">Lyase</keyword>
<keyword id="KW-0627">Porphyrin biosynthesis</keyword>
<keyword id="KW-1185">Reference proteome</keyword>